<feature type="signal peptide" evidence="1">
    <location>
        <begin position="1"/>
        <end position="19"/>
    </location>
</feature>
<feature type="chain" id="PRO_5004049112" description="Virulence protein ATR13">
    <location>
        <begin position="20"/>
        <end position="187"/>
    </location>
</feature>
<feature type="repeat" description="1" evidence="11">
    <location>
        <begin position="93"/>
        <end position="103"/>
    </location>
</feature>
<feature type="repeat" description="2" evidence="11">
    <location>
        <begin position="104"/>
        <end position="114"/>
    </location>
</feature>
<feature type="repeat" description="3" evidence="11">
    <location>
        <begin position="115"/>
        <end position="125"/>
    </location>
</feature>
<feature type="repeat" description="4" evidence="11">
    <location>
        <begin position="126"/>
        <end position="136"/>
    </location>
</feature>
<feature type="region of interest" description="Leucine heptad repeat region" evidence="11">
    <location>
        <begin position="50"/>
        <end position="92"/>
    </location>
</feature>
<feature type="region of interest" description="4 X 11 AA tandem repeats" evidence="11">
    <location>
        <begin position="93"/>
        <end position="136"/>
    </location>
</feature>
<feature type="region of interest" description="Disordered" evidence="2">
    <location>
        <begin position="104"/>
        <end position="136"/>
    </location>
</feature>
<feature type="region of interest" description="Highly variable C-terminus domain" evidence="11">
    <location>
        <begin position="137"/>
        <end position="187"/>
    </location>
</feature>
<feature type="short sequence motif" description="RxLR" evidence="11">
    <location>
        <begin position="38"/>
        <end position="41"/>
    </location>
</feature>
<feature type="compositionally biased region" description="Basic residues" evidence="2">
    <location>
        <begin position="111"/>
        <end position="125"/>
    </location>
</feature>
<feature type="compositionally biased region" description="Basic and acidic residues" evidence="2">
    <location>
        <begin position="126"/>
        <end position="136"/>
    </location>
</feature>
<feature type="mutagenesis site" description="Leads the gain of recognition (GOR) by RPP13-Nd." evidence="7">
    <original>N</original>
    <variation>I</variation>
    <variation>S</variation>
    <variation>Y</variation>
    <location>
        <position position="73"/>
    </location>
</feature>
<feature type="mutagenesis site" description="Leads to gain of recognition (GOR) by RPP13-Nd." evidence="5 7">
    <original>I</original>
    <variation>T</variation>
    <location>
        <position position="152"/>
    </location>
</feature>
<proteinExistence type="evidence at protein level"/>
<evidence type="ECO:0000255" key="1"/>
<evidence type="ECO:0000256" key="2">
    <source>
        <dbReference type="SAM" id="MobiDB-lite"/>
    </source>
</evidence>
<evidence type="ECO:0000269" key="3">
    <source>
    </source>
</evidence>
<evidence type="ECO:0000269" key="4">
    <source>
    </source>
</evidence>
<evidence type="ECO:0000269" key="5">
    <source>
    </source>
</evidence>
<evidence type="ECO:0000269" key="6">
    <source>
    </source>
</evidence>
<evidence type="ECO:0000269" key="7">
    <source>
    </source>
</evidence>
<evidence type="ECO:0000269" key="8">
    <source>
    </source>
</evidence>
<evidence type="ECO:0000303" key="9">
    <source>
    </source>
</evidence>
<evidence type="ECO:0000305" key="10"/>
<evidence type="ECO:0000305" key="11">
    <source>
    </source>
</evidence>
<evidence type="ECO:0000305" key="12">
    <source>
    </source>
</evidence>
<organism>
    <name type="scientific">Hyaloperonospora arabidopsidis (strain Emoy2)</name>
    <name type="common">Downy mildew agent</name>
    <name type="synonym">Peronospora arabidopsidis</name>
    <dbReference type="NCBI Taxonomy" id="559515"/>
    <lineage>
        <taxon>Eukaryota</taxon>
        <taxon>Sar</taxon>
        <taxon>Stramenopiles</taxon>
        <taxon>Oomycota</taxon>
        <taxon>Peronosporales</taxon>
        <taxon>Peronosporaceae</taxon>
        <taxon>Hyaloperonospora</taxon>
    </lineage>
</organism>
<reference key="1">
    <citation type="journal article" date="2004" name="Science">
        <title>Host-parasite coevolutionary conflict between Arabidopsis and downy mildew.</title>
        <authorList>
            <person name="Allen R.L."/>
            <person name="Bittner-Eddy P.D."/>
            <person name="Grenville-Briggs L.J."/>
            <person name="Meitz J.C."/>
            <person name="Rehmany A.P."/>
            <person name="Rose L.E."/>
            <person name="Beynon J.L."/>
        </authorList>
    </citation>
    <scope>NUCLEOTIDE SEQUENCE [GENOMIC DNA]</scope>
    <scope>FUNCTION</scope>
    <source>
        <strain>Emoy2</strain>
    </source>
</reference>
<reference key="2">
    <citation type="journal article" date="2010" name="Science">
        <title>Signatures of adaptation to obligate biotrophy in the Hyaloperonospora arabidopsidis genome.</title>
        <authorList>
            <person name="Baxter L."/>
            <person name="Tripathy S."/>
            <person name="Ishaque N."/>
            <person name="Boot N."/>
            <person name="Cabral A."/>
            <person name="Kemen E."/>
            <person name="Thines M."/>
            <person name="Ah-Fong A."/>
            <person name="Anderson R."/>
            <person name="Badejoko W."/>
            <person name="Bittner-Eddy P."/>
            <person name="Boore J.L."/>
            <person name="Chibucos M.C."/>
            <person name="Coates M."/>
            <person name="Dehal P."/>
            <person name="Delehaunty K."/>
            <person name="Dong S."/>
            <person name="Downton P."/>
            <person name="Dumas B."/>
            <person name="Fabro G."/>
            <person name="Fronick C."/>
            <person name="Fuerstenberg S.I."/>
            <person name="Fulton L."/>
            <person name="Gaulin E."/>
            <person name="Govers F."/>
            <person name="Hughes L."/>
            <person name="Humphray S."/>
            <person name="Jiang R.H."/>
            <person name="Judelson H."/>
            <person name="Kamoun S."/>
            <person name="Kyung K."/>
            <person name="Meijer H."/>
            <person name="Minx P."/>
            <person name="Morris P."/>
            <person name="Nelson J."/>
            <person name="Phuntumart V."/>
            <person name="Qutob D."/>
            <person name="Rehmany A."/>
            <person name="Rougon-Cardoso A."/>
            <person name="Ryden P."/>
            <person name="Torto-Alalibo T."/>
            <person name="Studholme D."/>
            <person name="Wang Y."/>
            <person name="Win J."/>
            <person name="Wood J."/>
            <person name="Clifton S.W."/>
            <person name="Rogers J."/>
            <person name="Van den Ackerveken G."/>
            <person name="Jones J.D."/>
            <person name="McDowell J.M."/>
            <person name="Beynon J."/>
            <person name="Tyler B.M."/>
        </authorList>
    </citation>
    <scope>NUCLEOTIDE SEQUENCE [LARGE SCALE GENOMIC DNA]</scope>
    <source>
        <strain>Emoy2</strain>
    </source>
</reference>
<reference key="3">
    <citation type="submission" date="2015-06" db="UniProtKB">
        <authorList>
            <consortium name="EnsemblProtists"/>
        </authorList>
    </citation>
    <scope>IDENTIFICATION</scope>
    <source>
        <strain>Emoy2</strain>
    </source>
</reference>
<reference key="4">
    <citation type="journal article" date="2007" name="Plant Cell">
        <title>The downy mildew effector proteins ATR1 and ATR13 promote disease susceptibility in Arabidopsis thaliana.</title>
        <authorList>
            <person name="Sohn K.H."/>
            <person name="Lei R."/>
            <person name="Nemri A."/>
            <person name="Jones J.D."/>
        </authorList>
    </citation>
    <scope>FUNCTION</scope>
</reference>
<reference key="5">
    <citation type="journal article" date="2008" name="Microbiology">
        <title>Plasmodium falciparum and Hyaloperonospora parasitica effector translocation motifs are functional in Phytophthora infestans.</title>
        <authorList>
            <person name="Grouffaud S."/>
            <person name="van West P."/>
            <person name="Avrova A.O."/>
            <person name="Birch P.R."/>
            <person name="Whisson S.C."/>
        </authorList>
    </citation>
    <scope>DOMAIN</scope>
</reference>
<reference key="6">
    <citation type="journal article" date="2008" name="Proc. Natl. Acad. Sci. U.S.A.">
        <title>Recognition of the Hyaloperonospora parasitica effector ATR13 triggers resistance against oomycete, bacterial, and viral pathogens.</title>
        <authorList>
            <person name="Rentel M.C."/>
            <person name="Leonelli L."/>
            <person name="Dahlbeck D."/>
            <person name="Zhao B."/>
            <person name="Staskawicz B.J."/>
        </authorList>
    </citation>
    <scope>FUNCTION</scope>
    <scope>DOMAIN</scope>
    <scope>MUTAGENESIS OF ILE-152</scope>
</reference>
<reference key="7">
    <citation type="journal article" date="2009" name="Mol. Plant Pathol.">
        <title>Maintenance of genetic variation in plants and pathogens involves complex networks of gene-for-gene interactions.</title>
        <authorList>
            <person name="Hall S.A."/>
            <person name="Allen R.L."/>
            <person name="Baumber R.E."/>
            <person name="Baxter L.A."/>
            <person name="Fisher K."/>
            <person name="Bittner-Eddy P.D."/>
            <person name="Rose L.E."/>
            <person name="Holub E.B."/>
            <person name="Beynon J.L."/>
        </authorList>
    </citation>
    <scope>FUNCTION</scope>
</reference>
<reference key="8">
    <citation type="journal article" date="2011" name="PLoS ONE">
        <title>Global analysis of Arabidopsis/downy mildew interactions reveals prevalence of incomplete resistance and rapid evolution of pathogen recognition.</title>
        <authorList>
            <person name="Krasileva K.V."/>
            <person name="Zheng C."/>
            <person name="Leonelli L."/>
            <person name="Goritschnig S."/>
            <person name="Dahlbeck D."/>
            <person name="Staskawicz B.J."/>
        </authorList>
    </citation>
    <scope>FUNCTION</scope>
</reference>
<reference key="9">
    <citation type="journal article" date="2011" name="PLoS Pathog.">
        <title>Structural elucidation and functional characterization of the Hyaloperonospora arabidopsidis effector protein ATR13.</title>
        <authorList>
            <person name="Leonelli L."/>
            <person name="Pelton J."/>
            <person name="Schoeffler A."/>
            <person name="Dahlbeck D."/>
            <person name="Berger J."/>
            <person name="Wemmer D.E."/>
            <person name="Staskawicz B."/>
        </authorList>
    </citation>
    <scope>FUNCTION</scope>
    <scope>MUTAGENESIS OF ASN-73 AND ILE-152</scope>
    <scope>SUBCELLULAR LOCATION</scope>
</reference>
<keyword id="KW-1035">Host cytoplasm</keyword>
<keyword id="KW-1048">Host nucleus</keyword>
<keyword id="KW-1185">Reference proteome</keyword>
<keyword id="KW-0677">Repeat</keyword>
<keyword id="KW-0964">Secreted</keyword>
<keyword id="KW-0732">Signal</keyword>
<keyword id="KW-0843">Virulence</keyword>
<protein>
    <recommendedName>
        <fullName evidence="9">Virulence protein ATR13</fullName>
    </recommendedName>
    <alternativeName>
        <fullName evidence="9">Arabidopsis thaliana recognized protein 13</fullName>
    </alternativeName>
</protein>
<gene>
    <name evidence="9" type="primary">ATR13</name>
</gene>
<comment type="function">
    <text evidence="3 4 5 6 7 8">Secreted effector that acts as an elicitor of hypersensitive response (HR) specifically on plants carrying defense protein RPP13. Recognition of ATR13 by RPP13 initiates defense responses that are effective against oomycete, bacterial and viral pathogens (PubMed:15591208, PubMed:18165328, PubMed:18198274, PubMed:22194907). Due to high polymorphism, ATR13-Emoy2 does not recognize RPP13-Nd, the RPP13 defense protein from Arabidopsis thaliana ecotype Niederzenz (PubMed:15591208, PubMed:18165328, PubMed:18198274, PubMed:22194684). ATR13-Emoy2 is recognized by RPP13 variants RPP13-UKID44, RPP13-UKID65 and RPP13-UKID71 (PubMed:19523099).</text>
</comment>
<comment type="subcellular location">
    <subcellularLocation>
        <location evidence="7">Secreted</location>
    </subcellularLocation>
    <subcellularLocation>
        <location evidence="7">Host nucleus</location>
        <location evidence="7">Host nucleolus</location>
    </subcellularLocation>
    <subcellularLocation>
        <location evidence="7">Host cytoplasm</location>
    </subcellularLocation>
    <text evidence="7">Localizes to the cytoplasmic scaffolding and to discrete punctate spots along these strands.</text>
</comment>
<comment type="domain">
    <text evidence="12">Has the canonical translocation motif RxLR, but lacks the canonical EER motif, which characterizes most oomycete effectors identified so far.</text>
</comment>
<comment type="domain">
    <text evidence="5">The leucine heptad repeat region contains five protein variants with 12 amino acid polymorphisms. Leucine heptad repeats are a feature of coiled coils where the leucines are embedded in an alpha helical region. Three of the different variants were recognized by RPP13-Nd, suggesting that alteration of the amino acid sequence in this region is tolerated.</text>
</comment>
<comment type="domain">
    <text evidence="5 7">All ATR13 variants contain at least one 11-amino-acid direct repeat region. This region is involved in nucleolar localization. A single repeat unit is found in ATR13-Aswa1, ATR13-Emco5, ATR13-Goco1-A and ATR13-Goco1-B (ATR13-Hind2 has one repeat unit followed by an additional 3 amino acids), preventing nucleolar localization, whereas three units are present in ATR13-Bico1, ATR13-Waco5 and ATR13-Wela3, and four units are present in ATR13-Maks9, ATR13-Hiks1, ATR13-Cala2, ATR13-Cand5, ATR13-Hind4, ATR13-Emwa1-A, ATR13-Emwa1-B, ATR13-Emoy2, ATR13-Noks1 and ATR13-Ahnd1. In addition there are 14 polymorphic positions, resulting in a total of seven variant forms within this domain. No association between the number or sequence identity of these repeats and recognition by RPP13-Nd could be detected.</text>
</comment>
<comment type="domain">
    <text evidence="5">The highly variable C-terminus domain and is involved in the specificity for the recognition by RPP13-Nd. 'Thr-152' and 'Arg-181' are critical for recognition by A.thaliana RPP13-Nd.</text>
</comment>
<comment type="miscellaneous">
    <text evidence="3 5 7">The ATR13 effector protein is a highly polymorphic member of the RXLR class, yet only a small subset of the polymorphic residues appear to be involved in RPP13Nd-mediated recognition. Polymorphic residues of ATR13 appear as clusters across the surface of the protein. ATR13-Emoy2 is not recognized by RPP13-Nd because it has Ile-152 and Gln-181 rather than 'Thr-152' and 'Arg-181' within the highly variable C-terminus domain.</text>
</comment>
<comment type="similarity">
    <text evidence="10">Belongs to the RxLR effector family.</text>
</comment>
<sequence length="187" mass="20704">MRLVHAVLLPGIIVFVSNGNLLHAHALHEDETGVTAGRQLRAAASEVFGLSRASFGLGKAQDPLDKFFRKIINSRKPIETSYSAKGIHEKIIKAYDRHVFESKKAHDRHVSKSKKAHGRHVSKSKMAHDRHVSKSEKAPIQYASVADYLKKIYPGTDIERIVSTLKRHDEVGAKDLGAKLQTAVASQ</sequence>
<accession>M4C367</accession>
<accession>Q5G7L2</accession>
<dbReference type="EMBL" id="AY785302">
    <property type="protein sequence ID" value="AAW63764.1"/>
    <property type="molecule type" value="Genomic_DNA"/>
</dbReference>
<dbReference type="EMBL" id="JH598153">
    <property type="status" value="NOT_ANNOTATED_CDS"/>
    <property type="molecule type" value="Genomic_DNA"/>
</dbReference>
<dbReference type="SMR" id="M4C367"/>
<dbReference type="EnsemblProtists" id="HpaT813534">
    <property type="protein sequence ID" value="HpaP813534"/>
    <property type="gene ID" value="HpaG813534"/>
</dbReference>
<dbReference type="VEuPathDB" id="FungiDB:HpaG813534"/>
<dbReference type="HOGENOM" id="CLU_1450271_0_0_1"/>
<dbReference type="InParanoid" id="M4C367"/>
<dbReference type="PHI-base" id="PHI:2422"/>
<dbReference type="Proteomes" id="UP000011713">
    <property type="component" value="Unassembled WGS sequence"/>
</dbReference>
<dbReference type="GO" id="GO:0005576">
    <property type="term" value="C:extracellular region"/>
    <property type="evidence" value="ECO:0007669"/>
    <property type="project" value="UniProtKB-SubCell"/>
</dbReference>
<dbReference type="GO" id="GO:0030430">
    <property type="term" value="C:host cell cytoplasm"/>
    <property type="evidence" value="ECO:0007669"/>
    <property type="project" value="UniProtKB-SubCell"/>
</dbReference>
<dbReference type="GO" id="GO:0044196">
    <property type="term" value="C:host cell nucleolus"/>
    <property type="evidence" value="ECO:0007669"/>
    <property type="project" value="UniProtKB-SubCell"/>
</dbReference>
<dbReference type="Gene3D" id="1.25.40.640">
    <property type="entry name" value="Avirulence protein ATR13"/>
    <property type="match status" value="2"/>
</dbReference>
<dbReference type="InterPro" id="IPR031791">
    <property type="entry name" value="ATR13"/>
</dbReference>
<dbReference type="InterPro" id="IPR038525">
    <property type="entry name" value="ATR13_sf"/>
</dbReference>
<dbReference type="Pfam" id="PF16829">
    <property type="entry name" value="ATR13"/>
    <property type="match status" value="2"/>
</dbReference>
<name>ATR13_HYAAE</name>